<sequence>MPHTEEFDVIVIGAGHAGCEAALAAARLGCQTLLLTLNLDRIGWQPCNPAVGGPAKSQLAHEVDALGGEIGKMADRTYLQKRVLNASRGPAVWALRAQTDKREYAAVIKQVLEQQPNLRLREGMVTDLLIGPNDEVQGVTTYFGSSFRAKAVILTTGTFLGGCIWVGNKSMPAGRAGEFAAVGLTETLQRLGFETDRLKTGTPARVDKRSVDYSRLEPQPGDPEVRWFSFDPEAWVEREQLPCYLTRTTAETHKLIRDNLYLTPVYGGYIDAKGPRYCPSIEDKIVRFADKESHQIFIEPEGRDIPELYIQGFSTGLPEDLQLALLQTLPGLEDCVMLRPAYAVEYDYLPATQCLPTLMTRRVEGLFSAGQLNGTTGYEEAAAQGIVAGINAARFVQGQDAIVFPREGSYIGTLIDDLCTKDLREPYRVLTSRSEYRLLLRADNADQRMTPLGREIGLIDDRRWALFEQKQARIAAEQTRLTQQRVKEHDPVGQAIAQQTQAPIKGSATLADLLRRPNFHYIDLEAHGLGDPSLAIAEKEGAEIAIKYAGYLQRQQAQVDQVVRQSQRPLPVDLDYSAITSMRLEAREKLARFRPLTLGQASRIGGVNPADINALLIWLEVQERQRSQVETALVR</sequence>
<reference key="1">
    <citation type="journal article" date="2007" name="Photosyn. Res.">
        <title>Complete nucleotide sequence of the freshwater unicellular cyanobacterium Synechococcus elongatus PCC 6301 chromosome: gene content and organization.</title>
        <authorList>
            <person name="Sugita C."/>
            <person name="Ogata K."/>
            <person name="Shikata M."/>
            <person name="Jikuya H."/>
            <person name="Takano J."/>
            <person name="Furumichi M."/>
            <person name="Kanehisa M."/>
            <person name="Omata T."/>
            <person name="Sugiura M."/>
            <person name="Sugita M."/>
        </authorList>
    </citation>
    <scope>NUCLEOTIDE SEQUENCE [LARGE SCALE GENOMIC DNA]</scope>
    <source>
        <strain>ATCC 27144 / PCC 6301 / SAUG 1402/1</strain>
    </source>
</reference>
<proteinExistence type="inferred from homology"/>
<gene>
    <name evidence="1" type="primary">mnmG</name>
    <name evidence="1" type="synonym">gidA</name>
    <name type="ordered locus">syc1683_d</name>
</gene>
<dbReference type="EMBL" id="AP008231">
    <property type="protein sequence ID" value="BAD79873.1"/>
    <property type="molecule type" value="Genomic_DNA"/>
</dbReference>
<dbReference type="RefSeq" id="WP_011243993.1">
    <property type="nucleotide sequence ID" value="NC_006576.1"/>
</dbReference>
<dbReference type="SMR" id="Q5N1E7"/>
<dbReference type="KEGG" id="syc:syc1683_d"/>
<dbReference type="eggNOG" id="COG0445">
    <property type="taxonomic scope" value="Bacteria"/>
</dbReference>
<dbReference type="Proteomes" id="UP000001175">
    <property type="component" value="Chromosome"/>
</dbReference>
<dbReference type="GO" id="GO:0005737">
    <property type="term" value="C:cytoplasm"/>
    <property type="evidence" value="ECO:0007669"/>
    <property type="project" value="UniProtKB-SubCell"/>
</dbReference>
<dbReference type="GO" id="GO:0050660">
    <property type="term" value="F:flavin adenine dinucleotide binding"/>
    <property type="evidence" value="ECO:0007669"/>
    <property type="project" value="UniProtKB-UniRule"/>
</dbReference>
<dbReference type="GO" id="GO:0030488">
    <property type="term" value="P:tRNA methylation"/>
    <property type="evidence" value="ECO:0007669"/>
    <property type="project" value="TreeGrafter"/>
</dbReference>
<dbReference type="GO" id="GO:0002098">
    <property type="term" value="P:tRNA wobble uridine modification"/>
    <property type="evidence" value="ECO:0007669"/>
    <property type="project" value="InterPro"/>
</dbReference>
<dbReference type="FunFam" id="1.10.10.1800:FF:000001">
    <property type="entry name" value="tRNA uridine 5-carboxymethylaminomethyl modification enzyme MnmG"/>
    <property type="match status" value="1"/>
</dbReference>
<dbReference type="FunFam" id="1.10.150.570:FF:000001">
    <property type="entry name" value="tRNA uridine 5-carboxymethylaminomethyl modification enzyme MnmG"/>
    <property type="match status" value="1"/>
</dbReference>
<dbReference type="FunFam" id="3.50.50.60:FF:000094">
    <property type="entry name" value="tRNA uridine 5-carboxymethylaminomethyl modification enzyme MnmG"/>
    <property type="match status" value="1"/>
</dbReference>
<dbReference type="FunFam" id="3.50.50.60:FF:000119">
    <property type="entry name" value="tRNA uridine 5-carboxymethylaminomethyl modification enzyme MnmG"/>
    <property type="match status" value="1"/>
</dbReference>
<dbReference type="Gene3D" id="3.50.50.60">
    <property type="entry name" value="FAD/NAD(P)-binding domain"/>
    <property type="match status" value="2"/>
</dbReference>
<dbReference type="Gene3D" id="1.10.150.570">
    <property type="entry name" value="GidA associated domain, C-terminal subdomain"/>
    <property type="match status" value="1"/>
</dbReference>
<dbReference type="Gene3D" id="1.10.10.1800">
    <property type="entry name" value="tRNA uridine 5-carboxymethylaminomethyl modification enzyme MnmG/GidA"/>
    <property type="match status" value="1"/>
</dbReference>
<dbReference type="HAMAP" id="MF_00129">
    <property type="entry name" value="MnmG_GidA"/>
    <property type="match status" value="1"/>
</dbReference>
<dbReference type="InterPro" id="IPR036188">
    <property type="entry name" value="FAD/NAD-bd_sf"/>
</dbReference>
<dbReference type="InterPro" id="IPR049312">
    <property type="entry name" value="GIDA_C_N"/>
</dbReference>
<dbReference type="InterPro" id="IPR004416">
    <property type="entry name" value="MnmG"/>
</dbReference>
<dbReference type="InterPro" id="IPR002218">
    <property type="entry name" value="MnmG-rel"/>
</dbReference>
<dbReference type="InterPro" id="IPR020595">
    <property type="entry name" value="MnmG-rel_CS"/>
</dbReference>
<dbReference type="InterPro" id="IPR026904">
    <property type="entry name" value="MnmG_C"/>
</dbReference>
<dbReference type="InterPro" id="IPR047001">
    <property type="entry name" value="MnmG_C_subdom"/>
</dbReference>
<dbReference type="InterPro" id="IPR044920">
    <property type="entry name" value="MnmG_C_subdom_sf"/>
</dbReference>
<dbReference type="InterPro" id="IPR040131">
    <property type="entry name" value="MnmG_N"/>
</dbReference>
<dbReference type="NCBIfam" id="TIGR00136">
    <property type="entry name" value="mnmG_gidA"/>
    <property type="match status" value="1"/>
</dbReference>
<dbReference type="PANTHER" id="PTHR11806">
    <property type="entry name" value="GLUCOSE INHIBITED DIVISION PROTEIN A"/>
    <property type="match status" value="1"/>
</dbReference>
<dbReference type="PANTHER" id="PTHR11806:SF0">
    <property type="entry name" value="PROTEIN MTO1 HOMOLOG, MITOCHONDRIAL"/>
    <property type="match status" value="1"/>
</dbReference>
<dbReference type="Pfam" id="PF01134">
    <property type="entry name" value="GIDA"/>
    <property type="match status" value="1"/>
</dbReference>
<dbReference type="Pfam" id="PF21680">
    <property type="entry name" value="GIDA_C_1st"/>
    <property type="match status" value="1"/>
</dbReference>
<dbReference type="Pfam" id="PF13932">
    <property type="entry name" value="SAM_GIDA_C"/>
    <property type="match status" value="1"/>
</dbReference>
<dbReference type="SMART" id="SM01228">
    <property type="entry name" value="GIDA_assoc_3"/>
    <property type="match status" value="1"/>
</dbReference>
<dbReference type="SUPFAM" id="SSF51905">
    <property type="entry name" value="FAD/NAD(P)-binding domain"/>
    <property type="match status" value="1"/>
</dbReference>
<dbReference type="PROSITE" id="PS01280">
    <property type="entry name" value="GIDA_1"/>
    <property type="match status" value="1"/>
</dbReference>
<dbReference type="PROSITE" id="PS01281">
    <property type="entry name" value="GIDA_2"/>
    <property type="match status" value="1"/>
</dbReference>
<organism>
    <name type="scientific">Synechococcus sp. (strain ATCC 27144 / PCC 6301 / SAUG 1402/1)</name>
    <name type="common">Anacystis nidulans</name>
    <dbReference type="NCBI Taxonomy" id="269084"/>
    <lineage>
        <taxon>Bacteria</taxon>
        <taxon>Bacillati</taxon>
        <taxon>Cyanobacteriota</taxon>
        <taxon>Cyanophyceae</taxon>
        <taxon>Synechococcales</taxon>
        <taxon>Synechococcaceae</taxon>
        <taxon>Synechococcus</taxon>
    </lineage>
</organism>
<keyword id="KW-0963">Cytoplasm</keyword>
<keyword id="KW-0274">FAD</keyword>
<keyword id="KW-0285">Flavoprotein</keyword>
<keyword id="KW-0520">NAD</keyword>
<keyword id="KW-0819">tRNA processing</keyword>
<evidence type="ECO:0000255" key="1">
    <source>
        <dbReference type="HAMAP-Rule" id="MF_00129"/>
    </source>
</evidence>
<comment type="function">
    <text evidence="1">NAD-binding protein involved in the addition of a carboxymethylaminomethyl (cmnm) group at the wobble position (U34) of certain tRNAs, forming tRNA-cmnm(5)s(2)U34.</text>
</comment>
<comment type="cofactor">
    <cofactor evidence="1">
        <name>FAD</name>
        <dbReference type="ChEBI" id="CHEBI:57692"/>
    </cofactor>
</comment>
<comment type="subunit">
    <text evidence="1">Homodimer. Heterotetramer of two MnmE and two MnmG subunits.</text>
</comment>
<comment type="subcellular location">
    <subcellularLocation>
        <location evidence="1">Cytoplasm</location>
    </subcellularLocation>
</comment>
<comment type="similarity">
    <text evidence="1">Belongs to the MnmG family.</text>
</comment>
<name>MNMG_SYNP6</name>
<accession>Q5N1E7</accession>
<feature type="chain" id="PRO_0000117197" description="tRNA uridine 5-carboxymethylaminomethyl modification enzyme MnmG">
    <location>
        <begin position="1"/>
        <end position="635"/>
    </location>
</feature>
<feature type="binding site" evidence="1">
    <location>
        <begin position="13"/>
        <end position="18"/>
    </location>
    <ligand>
        <name>FAD</name>
        <dbReference type="ChEBI" id="CHEBI:57692"/>
    </ligand>
</feature>
<feature type="binding site" evidence="1">
    <location>
        <begin position="274"/>
        <end position="288"/>
    </location>
    <ligand>
        <name>NAD(+)</name>
        <dbReference type="ChEBI" id="CHEBI:57540"/>
    </ligand>
</feature>
<protein>
    <recommendedName>
        <fullName evidence="1">tRNA uridine 5-carboxymethylaminomethyl modification enzyme MnmG</fullName>
    </recommendedName>
    <alternativeName>
        <fullName evidence="1">Glucose-inhibited division protein A</fullName>
    </alternativeName>
</protein>